<dbReference type="EMBL" id="AE017198">
    <property type="protein sequence ID" value="AAS09321.1"/>
    <property type="molecule type" value="Genomic_DNA"/>
</dbReference>
<dbReference type="SMR" id="Q74IL7"/>
<dbReference type="KEGG" id="ljo:LJ_1553"/>
<dbReference type="eggNOG" id="COG0231">
    <property type="taxonomic scope" value="Bacteria"/>
</dbReference>
<dbReference type="HOGENOM" id="CLU_074944_0_1_9"/>
<dbReference type="UniPathway" id="UPA00345"/>
<dbReference type="Proteomes" id="UP000000581">
    <property type="component" value="Chromosome"/>
</dbReference>
<dbReference type="GO" id="GO:0005737">
    <property type="term" value="C:cytoplasm"/>
    <property type="evidence" value="ECO:0007669"/>
    <property type="project" value="UniProtKB-SubCell"/>
</dbReference>
<dbReference type="GO" id="GO:0003746">
    <property type="term" value="F:translation elongation factor activity"/>
    <property type="evidence" value="ECO:0007669"/>
    <property type="project" value="UniProtKB-UniRule"/>
</dbReference>
<dbReference type="GO" id="GO:0043043">
    <property type="term" value="P:peptide biosynthetic process"/>
    <property type="evidence" value="ECO:0007669"/>
    <property type="project" value="InterPro"/>
</dbReference>
<dbReference type="CDD" id="cd04470">
    <property type="entry name" value="S1_EF-P_repeat_1"/>
    <property type="match status" value="1"/>
</dbReference>
<dbReference type="CDD" id="cd05794">
    <property type="entry name" value="S1_EF-P_repeat_2"/>
    <property type="match status" value="1"/>
</dbReference>
<dbReference type="FunFam" id="2.30.30.30:FF:000003">
    <property type="entry name" value="Elongation factor P"/>
    <property type="match status" value="1"/>
</dbReference>
<dbReference type="FunFam" id="2.40.50.140:FF:000004">
    <property type="entry name" value="Elongation factor P"/>
    <property type="match status" value="1"/>
</dbReference>
<dbReference type="FunFam" id="2.40.50.140:FF:000009">
    <property type="entry name" value="Elongation factor P"/>
    <property type="match status" value="1"/>
</dbReference>
<dbReference type="Gene3D" id="2.30.30.30">
    <property type="match status" value="1"/>
</dbReference>
<dbReference type="Gene3D" id="2.40.50.140">
    <property type="entry name" value="Nucleic acid-binding proteins"/>
    <property type="match status" value="2"/>
</dbReference>
<dbReference type="HAMAP" id="MF_00141">
    <property type="entry name" value="EF_P"/>
    <property type="match status" value="1"/>
</dbReference>
<dbReference type="InterPro" id="IPR015365">
    <property type="entry name" value="Elong-fact-P_C"/>
</dbReference>
<dbReference type="InterPro" id="IPR012340">
    <property type="entry name" value="NA-bd_OB-fold"/>
</dbReference>
<dbReference type="InterPro" id="IPR014722">
    <property type="entry name" value="Rib_uL2_dom2"/>
</dbReference>
<dbReference type="InterPro" id="IPR020599">
    <property type="entry name" value="Transl_elong_fac_P/YeiP"/>
</dbReference>
<dbReference type="InterPro" id="IPR013185">
    <property type="entry name" value="Transl_elong_KOW-like"/>
</dbReference>
<dbReference type="InterPro" id="IPR001059">
    <property type="entry name" value="Transl_elong_P/YeiP_cen"/>
</dbReference>
<dbReference type="InterPro" id="IPR013852">
    <property type="entry name" value="Transl_elong_P/YeiP_CS"/>
</dbReference>
<dbReference type="InterPro" id="IPR011768">
    <property type="entry name" value="Transl_elongation_fac_P"/>
</dbReference>
<dbReference type="InterPro" id="IPR008991">
    <property type="entry name" value="Translation_prot_SH3-like_sf"/>
</dbReference>
<dbReference type="NCBIfam" id="TIGR00038">
    <property type="entry name" value="efp"/>
    <property type="match status" value="1"/>
</dbReference>
<dbReference type="NCBIfam" id="NF001810">
    <property type="entry name" value="PRK00529.1"/>
    <property type="match status" value="1"/>
</dbReference>
<dbReference type="PANTHER" id="PTHR30053">
    <property type="entry name" value="ELONGATION FACTOR P"/>
    <property type="match status" value="1"/>
</dbReference>
<dbReference type="PANTHER" id="PTHR30053:SF12">
    <property type="entry name" value="ELONGATION FACTOR P (EF-P) FAMILY PROTEIN"/>
    <property type="match status" value="1"/>
</dbReference>
<dbReference type="Pfam" id="PF01132">
    <property type="entry name" value="EFP"/>
    <property type="match status" value="1"/>
</dbReference>
<dbReference type="Pfam" id="PF08207">
    <property type="entry name" value="EFP_N"/>
    <property type="match status" value="1"/>
</dbReference>
<dbReference type="Pfam" id="PF09285">
    <property type="entry name" value="Elong-fact-P_C"/>
    <property type="match status" value="1"/>
</dbReference>
<dbReference type="PIRSF" id="PIRSF005901">
    <property type="entry name" value="EF-P"/>
    <property type="match status" value="1"/>
</dbReference>
<dbReference type="SMART" id="SM01185">
    <property type="entry name" value="EFP"/>
    <property type="match status" value="1"/>
</dbReference>
<dbReference type="SMART" id="SM00841">
    <property type="entry name" value="Elong-fact-P_C"/>
    <property type="match status" value="1"/>
</dbReference>
<dbReference type="SUPFAM" id="SSF50249">
    <property type="entry name" value="Nucleic acid-binding proteins"/>
    <property type="match status" value="2"/>
</dbReference>
<dbReference type="SUPFAM" id="SSF50104">
    <property type="entry name" value="Translation proteins SH3-like domain"/>
    <property type="match status" value="1"/>
</dbReference>
<dbReference type="PROSITE" id="PS01275">
    <property type="entry name" value="EFP"/>
    <property type="match status" value="1"/>
</dbReference>
<reference key="1">
    <citation type="journal article" date="2004" name="Proc. Natl. Acad. Sci. U.S.A.">
        <title>The genome sequence of the probiotic intestinal bacterium Lactobacillus johnsonii NCC 533.</title>
        <authorList>
            <person name="Pridmore R.D."/>
            <person name="Berger B."/>
            <person name="Desiere F."/>
            <person name="Vilanova D."/>
            <person name="Barretto C."/>
            <person name="Pittet A.-C."/>
            <person name="Zwahlen M.-C."/>
            <person name="Rouvet M."/>
            <person name="Altermann E."/>
            <person name="Barrangou R."/>
            <person name="Mollet B."/>
            <person name="Mercenier A."/>
            <person name="Klaenhammer T."/>
            <person name="Arigoni F."/>
            <person name="Schell M.A."/>
        </authorList>
    </citation>
    <scope>NUCLEOTIDE SEQUENCE [LARGE SCALE GENOMIC DNA]</scope>
    <source>
        <strain>CNCM I-1225 / La1 / NCC 533</strain>
    </source>
</reference>
<gene>
    <name type="primary">efp2</name>
    <name type="ordered locus">LJ_1553</name>
</gene>
<sequence>MTMISVNEFKNGLTIEYNNDLWRIVEFQHVKPGKGSAFVRSKLKSLRTGAVQEYTFRSTAKVNTADIQTKAMQYLYNDGTSFVFMDTNTYEQLEIPEAQVERESKFLKENMVVNVITHEGETLGVDLPNTVDLEVAETEPNIKGDTSSGGGKPATMETGLVVNVPFFINQGDVLTINTADGTYVSRANK</sequence>
<organism>
    <name type="scientific">Lactobacillus johnsonii (strain CNCM I-12250 / La1 / NCC 533)</name>
    <dbReference type="NCBI Taxonomy" id="257314"/>
    <lineage>
        <taxon>Bacteria</taxon>
        <taxon>Bacillati</taxon>
        <taxon>Bacillota</taxon>
        <taxon>Bacilli</taxon>
        <taxon>Lactobacillales</taxon>
        <taxon>Lactobacillaceae</taxon>
        <taxon>Lactobacillus</taxon>
    </lineage>
</organism>
<feature type="chain" id="PRO_0000094266" description="Elongation factor P 2">
    <location>
        <begin position="1"/>
        <end position="189"/>
    </location>
</feature>
<evidence type="ECO:0000250" key="1"/>
<evidence type="ECO:0000305" key="2"/>
<accession>Q74IL7</accession>
<protein>
    <recommendedName>
        <fullName>Elongation factor P 2</fullName>
        <shortName>EF-P 2</shortName>
    </recommendedName>
</protein>
<comment type="function">
    <text evidence="1">Involved in peptide bond synthesis. Stimulates efficient translation and peptide-bond synthesis on native or reconstituted 70S ribosomes in vitro. Probably functions indirectly by altering the affinity of the ribosome for aminoacyl-tRNA, thus increasing their reactivity as acceptors for peptidyl transferase (By similarity).</text>
</comment>
<comment type="pathway">
    <text>Protein biosynthesis; polypeptide chain elongation.</text>
</comment>
<comment type="subcellular location">
    <subcellularLocation>
        <location evidence="1">Cytoplasm</location>
    </subcellularLocation>
</comment>
<comment type="similarity">
    <text evidence="2">Belongs to the elongation factor P family.</text>
</comment>
<proteinExistence type="inferred from homology"/>
<keyword id="KW-0963">Cytoplasm</keyword>
<keyword id="KW-0251">Elongation factor</keyword>
<keyword id="KW-0648">Protein biosynthesis</keyword>
<name>EFP2_LACJO</name>